<accession>P9WGC6</accession>
<accession>L0T598</accession>
<accession>P71558</accession>
<comment type="function">
    <text evidence="1">Succinyl-CoA synthetase functions in the citric acid cycle (TCA), coupling the hydrolysis of succinyl-CoA to the synthesis of either ATP or GTP and thus represents the only step of substrate-level phosphorylation in the TCA. The alpha subunit of the enzyme binds the substrates coenzyme A and phosphate, while succinate binding and nucleotide specificity is provided by the beta subunit.</text>
</comment>
<comment type="catalytic activity">
    <reaction evidence="1">
        <text>succinate + ATP + CoA = succinyl-CoA + ADP + phosphate</text>
        <dbReference type="Rhea" id="RHEA:17661"/>
        <dbReference type="ChEBI" id="CHEBI:30031"/>
        <dbReference type="ChEBI" id="CHEBI:30616"/>
        <dbReference type="ChEBI" id="CHEBI:43474"/>
        <dbReference type="ChEBI" id="CHEBI:57287"/>
        <dbReference type="ChEBI" id="CHEBI:57292"/>
        <dbReference type="ChEBI" id="CHEBI:456216"/>
        <dbReference type="EC" id="6.2.1.5"/>
    </reaction>
    <physiologicalReaction direction="right-to-left" evidence="1">
        <dbReference type="Rhea" id="RHEA:17663"/>
    </physiologicalReaction>
</comment>
<comment type="catalytic activity">
    <reaction evidence="1">
        <text>GTP + succinate + CoA = succinyl-CoA + GDP + phosphate</text>
        <dbReference type="Rhea" id="RHEA:22120"/>
        <dbReference type="ChEBI" id="CHEBI:30031"/>
        <dbReference type="ChEBI" id="CHEBI:37565"/>
        <dbReference type="ChEBI" id="CHEBI:43474"/>
        <dbReference type="ChEBI" id="CHEBI:57287"/>
        <dbReference type="ChEBI" id="CHEBI:57292"/>
        <dbReference type="ChEBI" id="CHEBI:58189"/>
    </reaction>
    <physiologicalReaction direction="right-to-left" evidence="1">
        <dbReference type="Rhea" id="RHEA:22122"/>
    </physiologicalReaction>
</comment>
<comment type="pathway">
    <text evidence="1">Carbohydrate metabolism; tricarboxylic acid cycle; succinate from succinyl-CoA (ligase route): step 1/1.</text>
</comment>
<comment type="subunit">
    <text evidence="1">Heterotetramer of two alpha and two beta subunits.</text>
</comment>
<comment type="similarity">
    <text evidence="1">Belongs to the succinate/malate CoA ligase alpha subunit family.</text>
</comment>
<feature type="chain" id="PRO_0000428385" description="Succinate--CoA ligase [ADP-forming] subunit alpha">
    <location>
        <begin position="1"/>
        <end position="303"/>
    </location>
</feature>
<feature type="active site" description="Tele-phosphohistidine intermediate" evidence="1">
    <location>
        <position position="259"/>
    </location>
</feature>
<feature type="binding site" evidence="1">
    <location>
        <begin position="20"/>
        <end position="23"/>
    </location>
    <ligand>
        <name>CoA</name>
        <dbReference type="ChEBI" id="CHEBI:57287"/>
    </ligand>
</feature>
<feature type="binding site" evidence="1">
    <location>
        <position position="46"/>
    </location>
    <ligand>
        <name>CoA</name>
        <dbReference type="ChEBI" id="CHEBI:57287"/>
    </ligand>
</feature>
<feature type="binding site" evidence="1">
    <location>
        <begin position="108"/>
        <end position="110"/>
    </location>
    <ligand>
        <name>CoA</name>
        <dbReference type="ChEBI" id="CHEBI:57287"/>
    </ligand>
</feature>
<feature type="binding site" evidence="1">
    <location>
        <position position="173"/>
    </location>
    <ligand>
        <name>substrate</name>
        <note>ligand shared with subunit beta</note>
    </ligand>
</feature>
<dbReference type="EC" id="6.2.1.5" evidence="1"/>
<dbReference type="EMBL" id="AE000516">
    <property type="protein sequence ID" value="AAK45227.1"/>
    <property type="molecule type" value="Genomic_DNA"/>
</dbReference>
<dbReference type="PIR" id="F70716">
    <property type="entry name" value="F70716"/>
</dbReference>
<dbReference type="SMR" id="P9WGC6"/>
<dbReference type="KEGG" id="mtc:MT0979"/>
<dbReference type="PATRIC" id="fig|83331.31.peg.1050"/>
<dbReference type="HOGENOM" id="CLU_052104_0_0_11"/>
<dbReference type="UniPathway" id="UPA00223">
    <property type="reaction ID" value="UER00999"/>
</dbReference>
<dbReference type="Proteomes" id="UP000001020">
    <property type="component" value="Chromosome"/>
</dbReference>
<dbReference type="GO" id="GO:0005829">
    <property type="term" value="C:cytosol"/>
    <property type="evidence" value="ECO:0007669"/>
    <property type="project" value="TreeGrafter"/>
</dbReference>
<dbReference type="GO" id="GO:0009361">
    <property type="term" value="C:succinate-CoA ligase complex (ADP-forming)"/>
    <property type="evidence" value="ECO:0007669"/>
    <property type="project" value="TreeGrafter"/>
</dbReference>
<dbReference type="GO" id="GO:0000166">
    <property type="term" value="F:nucleotide binding"/>
    <property type="evidence" value="ECO:0007669"/>
    <property type="project" value="UniProtKB-KW"/>
</dbReference>
<dbReference type="GO" id="GO:0004775">
    <property type="term" value="F:succinate-CoA ligase (ADP-forming) activity"/>
    <property type="evidence" value="ECO:0007669"/>
    <property type="project" value="UniProtKB-UniRule"/>
</dbReference>
<dbReference type="GO" id="GO:0004776">
    <property type="term" value="F:succinate-CoA ligase (GDP-forming) activity"/>
    <property type="evidence" value="ECO:0007669"/>
    <property type="project" value="TreeGrafter"/>
</dbReference>
<dbReference type="GO" id="GO:0006099">
    <property type="term" value="P:tricarboxylic acid cycle"/>
    <property type="evidence" value="ECO:0007669"/>
    <property type="project" value="UniProtKB-UniRule"/>
</dbReference>
<dbReference type="FunFam" id="3.40.50.261:FF:000006">
    <property type="entry name" value="Succinate--CoA ligase [ADP-forming] subunit alpha"/>
    <property type="match status" value="1"/>
</dbReference>
<dbReference type="FunFam" id="3.40.50.720:FF:000205">
    <property type="entry name" value="Succinate--CoA ligase [ADP-forming] subunit alpha"/>
    <property type="match status" value="1"/>
</dbReference>
<dbReference type="Gene3D" id="3.40.50.720">
    <property type="entry name" value="NAD(P)-binding Rossmann-like Domain"/>
    <property type="match status" value="1"/>
</dbReference>
<dbReference type="Gene3D" id="3.40.50.261">
    <property type="entry name" value="Succinyl-CoA synthetase domains"/>
    <property type="match status" value="1"/>
</dbReference>
<dbReference type="HAMAP" id="MF_01988">
    <property type="entry name" value="Succ_CoA_alpha"/>
    <property type="match status" value="1"/>
</dbReference>
<dbReference type="InterPro" id="IPR017440">
    <property type="entry name" value="Cit_synth/succinyl-CoA_lig_AS"/>
</dbReference>
<dbReference type="InterPro" id="IPR033847">
    <property type="entry name" value="Citrt_syn/SCS-alpha_CS"/>
</dbReference>
<dbReference type="InterPro" id="IPR003781">
    <property type="entry name" value="CoA-bd"/>
</dbReference>
<dbReference type="InterPro" id="IPR005810">
    <property type="entry name" value="CoA_lig_alpha"/>
</dbReference>
<dbReference type="InterPro" id="IPR036291">
    <property type="entry name" value="NAD(P)-bd_dom_sf"/>
</dbReference>
<dbReference type="InterPro" id="IPR005811">
    <property type="entry name" value="SUCC_ACL_C"/>
</dbReference>
<dbReference type="InterPro" id="IPR016102">
    <property type="entry name" value="Succinyl-CoA_synth-like"/>
</dbReference>
<dbReference type="NCBIfam" id="NF004230">
    <property type="entry name" value="PRK05678.1"/>
    <property type="match status" value="1"/>
</dbReference>
<dbReference type="NCBIfam" id="TIGR01019">
    <property type="entry name" value="sucCoAalpha"/>
    <property type="match status" value="1"/>
</dbReference>
<dbReference type="PANTHER" id="PTHR11117:SF2">
    <property type="entry name" value="SUCCINATE--COA LIGASE [ADP_GDP-FORMING] SUBUNIT ALPHA, MITOCHONDRIAL"/>
    <property type="match status" value="1"/>
</dbReference>
<dbReference type="PANTHER" id="PTHR11117">
    <property type="entry name" value="SUCCINYL-COA LIGASE SUBUNIT ALPHA"/>
    <property type="match status" value="1"/>
</dbReference>
<dbReference type="Pfam" id="PF02629">
    <property type="entry name" value="CoA_binding"/>
    <property type="match status" value="1"/>
</dbReference>
<dbReference type="Pfam" id="PF00549">
    <property type="entry name" value="Ligase_CoA"/>
    <property type="match status" value="1"/>
</dbReference>
<dbReference type="PIRSF" id="PIRSF001553">
    <property type="entry name" value="SucCS_alpha"/>
    <property type="match status" value="1"/>
</dbReference>
<dbReference type="PRINTS" id="PR01798">
    <property type="entry name" value="SCOASYNTHASE"/>
</dbReference>
<dbReference type="SMART" id="SM00881">
    <property type="entry name" value="CoA_binding"/>
    <property type="match status" value="1"/>
</dbReference>
<dbReference type="SUPFAM" id="SSF51735">
    <property type="entry name" value="NAD(P)-binding Rossmann-fold domains"/>
    <property type="match status" value="1"/>
</dbReference>
<dbReference type="SUPFAM" id="SSF52210">
    <property type="entry name" value="Succinyl-CoA synthetase domains"/>
    <property type="match status" value="1"/>
</dbReference>
<dbReference type="PROSITE" id="PS01216">
    <property type="entry name" value="SUCCINYL_COA_LIG_1"/>
    <property type="match status" value="1"/>
</dbReference>
<dbReference type="PROSITE" id="PS00399">
    <property type="entry name" value="SUCCINYL_COA_LIG_2"/>
    <property type="match status" value="1"/>
</dbReference>
<evidence type="ECO:0000255" key="1">
    <source>
        <dbReference type="HAMAP-Rule" id="MF_01988"/>
    </source>
</evidence>
<sequence length="303" mass="31229">MTHMSIFLSRDNKVIVQGITGSEATVHTARMLRAGTQIVGGVNARKAGTTVTHEDKGGRLIKLPVFGSVAEAMEKTGADVSIIFVPPTFAKDAIIEAIDAEIPLLVVITEGIPVQDTAYAWAYNLEAGHKTRIIGPNCPGIISPGQSLAGITPANITGPGPIGLVSKSGTLTYQMMFELRDLGFSTAIGIGGDPVIGTTHIDAIEAFERDPDTKLIVMIGEIGGDAEERAADFIKTNVSKPVVGYVAGFTAPEGKTMGHAGAIVSGSSGTAAAKQEALEAAGVKVGKTPSATAALAREILLSL</sequence>
<protein>
    <recommendedName>
        <fullName evidence="1">Succinate--CoA ligase [ADP-forming] subunit alpha</fullName>
        <ecNumber evidence="1">6.2.1.5</ecNumber>
    </recommendedName>
    <alternativeName>
        <fullName evidence="1">Succinyl-CoA synthetase subunit alpha</fullName>
        <shortName evidence="1">SCS-alpha</shortName>
    </alternativeName>
</protein>
<name>SUCD_MYCTO</name>
<keyword id="KW-0436">Ligase</keyword>
<keyword id="KW-0547">Nucleotide-binding</keyword>
<keyword id="KW-1185">Reference proteome</keyword>
<keyword id="KW-0816">Tricarboxylic acid cycle</keyword>
<reference key="1">
    <citation type="journal article" date="2002" name="J. Bacteriol.">
        <title>Whole-genome comparison of Mycobacterium tuberculosis clinical and laboratory strains.</title>
        <authorList>
            <person name="Fleischmann R.D."/>
            <person name="Alland D."/>
            <person name="Eisen J.A."/>
            <person name="Carpenter L."/>
            <person name="White O."/>
            <person name="Peterson J.D."/>
            <person name="DeBoy R.T."/>
            <person name="Dodson R.J."/>
            <person name="Gwinn M.L."/>
            <person name="Haft D.H."/>
            <person name="Hickey E.K."/>
            <person name="Kolonay J.F."/>
            <person name="Nelson W.C."/>
            <person name="Umayam L.A."/>
            <person name="Ermolaeva M.D."/>
            <person name="Salzberg S.L."/>
            <person name="Delcher A."/>
            <person name="Utterback T.R."/>
            <person name="Weidman J.F."/>
            <person name="Khouri H.M."/>
            <person name="Gill J."/>
            <person name="Mikula A."/>
            <person name="Bishai W."/>
            <person name="Jacobs W.R. Jr."/>
            <person name="Venter J.C."/>
            <person name="Fraser C.M."/>
        </authorList>
    </citation>
    <scope>NUCLEOTIDE SEQUENCE [LARGE SCALE GENOMIC DNA]</scope>
    <source>
        <strain>CDC 1551 / Oshkosh</strain>
    </source>
</reference>
<proteinExistence type="inferred from homology"/>
<gene>
    <name evidence="1" type="primary">sucD</name>
    <name type="ordered locus">MT0979</name>
</gene>
<organism>
    <name type="scientific">Mycobacterium tuberculosis (strain CDC 1551 / Oshkosh)</name>
    <dbReference type="NCBI Taxonomy" id="83331"/>
    <lineage>
        <taxon>Bacteria</taxon>
        <taxon>Bacillati</taxon>
        <taxon>Actinomycetota</taxon>
        <taxon>Actinomycetes</taxon>
        <taxon>Mycobacteriales</taxon>
        <taxon>Mycobacteriaceae</taxon>
        <taxon>Mycobacterium</taxon>
        <taxon>Mycobacterium tuberculosis complex</taxon>
    </lineage>
</organism>